<gene>
    <name evidence="1" type="primary">dapA</name>
    <name type="ordered locus">EcE24377A_2760</name>
</gene>
<protein>
    <recommendedName>
        <fullName evidence="1">4-hydroxy-tetrahydrodipicolinate synthase</fullName>
        <shortName evidence="1">HTPA synthase</shortName>
        <ecNumber evidence="1">4.3.3.7</ecNumber>
    </recommendedName>
</protein>
<organism>
    <name type="scientific">Escherichia coli O139:H28 (strain E24377A / ETEC)</name>
    <dbReference type="NCBI Taxonomy" id="331111"/>
    <lineage>
        <taxon>Bacteria</taxon>
        <taxon>Pseudomonadati</taxon>
        <taxon>Pseudomonadota</taxon>
        <taxon>Gammaproteobacteria</taxon>
        <taxon>Enterobacterales</taxon>
        <taxon>Enterobacteriaceae</taxon>
        <taxon>Escherichia</taxon>
    </lineage>
</organism>
<dbReference type="EC" id="4.3.3.7" evidence="1"/>
<dbReference type="EMBL" id="CP000800">
    <property type="protein sequence ID" value="ABV19838.1"/>
    <property type="molecule type" value="Genomic_DNA"/>
</dbReference>
<dbReference type="RefSeq" id="WP_001295469.1">
    <property type="nucleotide sequence ID" value="NC_009801.1"/>
</dbReference>
<dbReference type="SMR" id="A7ZPS4"/>
<dbReference type="GeneID" id="93774660"/>
<dbReference type="KEGG" id="ecw:EcE24377A_2760"/>
<dbReference type="HOGENOM" id="CLU_049343_7_1_6"/>
<dbReference type="UniPathway" id="UPA00034">
    <property type="reaction ID" value="UER00017"/>
</dbReference>
<dbReference type="Proteomes" id="UP000001122">
    <property type="component" value="Chromosome"/>
</dbReference>
<dbReference type="GO" id="GO:0005829">
    <property type="term" value="C:cytosol"/>
    <property type="evidence" value="ECO:0007669"/>
    <property type="project" value="TreeGrafter"/>
</dbReference>
<dbReference type="GO" id="GO:0008840">
    <property type="term" value="F:4-hydroxy-tetrahydrodipicolinate synthase activity"/>
    <property type="evidence" value="ECO:0007669"/>
    <property type="project" value="UniProtKB-UniRule"/>
</dbReference>
<dbReference type="GO" id="GO:0019877">
    <property type="term" value="P:diaminopimelate biosynthetic process"/>
    <property type="evidence" value="ECO:0007669"/>
    <property type="project" value="UniProtKB-UniRule"/>
</dbReference>
<dbReference type="GO" id="GO:0009089">
    <property type="term" value="P:lysine biosynthetic process via diaminopimelate"/>
    <property type="evidence" value="ECO:0007669"/>
    <property type="project" value="UniProtKB-UniRule"/>
</dbReference>
<dbReference type="CDD" id="cd00950">
    <property type="entry name" value="DHDPS"/>
    <property type="match status" value="1"/>
</dbReference>
<dbReference type="FunFam" id="3.20.20.70:FF:000046">
    <property type="entry name" value="4-hydroxy-tetrahydrodipicolinate synthase"/>
    <property type="match status" value="1"/>
</dbReference>
<dbReference type="Gene3D" id="3.20.20.70">
    <property type="entry name" value="Aldolase class I"/>
    <property type="match status" value="1"/>
</dbReference>
<dbReference type="HAMAP" id="MF_00418">
    <property type="entry name" value="DapA"/>
    <property type="match status" value="1"/>
</dbReference>
<dbReference type="InterPro" id="IPR013785">
    <property type="entry name" value="Aldolase_TIM"/>
</dbReference>
<dbReference type="InterPro" id="IPR005263">
    <property type="entry name" value="DapA"/>
</dbReference>
<dbReference type="InterPro" id="IPR002220">
    <property type="entry name" value="DapA-like"/>
</dbReference>
<dbReference type="InterPro" id="IPR020625">
    <property type="entry name" value="Schiff_base-form_aldolases_AS"/>
</dbReference>
<dbReference type="InterPro" id="IPR020624">
    <property type="entry name" value="Schiff_base-form_aldolases_CS"/>
</dbReference>
<dbReference type="NCBIfam" id="TIGR00674">
    <property type="entry name" value="dapA"/>
    <property type="match status" value="1"/>
</dbReference>
<dbReference type="PANTHER" id="PTHR12128:SF66">
    <property type="entry name" value="4-HYDROXY-2-OXOGLUTARATE ALDOLASE, MITOCHONDRIAL"/>
    <property type="match status" value="1"/>
</dbReference>
<dbReference type="PANTHER" id="PTHR12128">
    <property type="entry name" value="DIHYDRODIPICOLINATE SYNTHASE"/>
    <property type="match status" value="1"/>
</dbReference>
<dbReference type="Pfam" id="PF00701">
    <property type="entry name" value="DHDPS"/>
    <property type="match status" value="1"/>
</dbReference>
<dbReference type="PIRSF" id="PIRSF001365">
    <property type="entry name" value="DHDPS"/>
    <property type="match status" value="1"/>
</dbReference>
<dbReference type="PRINTS" id="PR00146">
    <property type="entry name" value="DHPICSNTHASE"/>
</dbReference>
<dbReference type="SMART" id="SM01130">
    <property type="entry name" value="DHDPS"/>
    <property type="match status" value="1"/>
</dbReference>
<dbReference type="SUPFAM" id="SSF51569">
    <property type="entry name" value="Aldolase"/>
    <property type="match status" value="1"/>
</dbReference>
<dbReference type="PROSITE" id="PS00665">
    <property type="entry name" value="DHDPS_1"/>
    <property type="match status" value="1"/>
</dbReference>
<dbReference type="PROSITE" id="PS00666">
    <property type="entry name" value="DHDPS_2"/>
    <property type="match status" value="1"/>
</dbReference>
<accession>A7ZPS4</accession>
<comment type="function">
    <text evidence="1">Catalyzes the condensation of (S)-aspartate-beta-semialdehyde [(S)-ASA] and pyruvate to 4-hydroxy-tetrahydrodipicolinate (HTPA).</text>
</comment>
<comment type="catalytic activity">
    <reaction evidence="1">
        <text>L-aspartate 4-semialdehyde + pyruvate = (2S,4S)-4-hydroxy-2,3,4,5-tetrahydrodipicolinate + H2O + H(+)</text>
        <dbReference type="Rhea" id="RHEA:34171"/>
        <dbReference type="ChEBI" id="CHEBI:15361"/>
        <dbReference type="ChEBI" id="CHEBI:15377"/>
        <dbReference type="ChEBI" id="CHEBI:15378"/>
        <dbReference type="ChEBI" id="CHEBI:67139"/>
        <dbReference type="ChEBI" id="CHEBI:537519"/>
        <dbReference type="EC" id="4.3.3.7"/>
    </reaction>
</comment>
<comment type="pathway">
    <text evidence="1">Amino-acid biosynthesis; L-lysine biosynthesis via DAP pathway; (S)-tetrahydrodipicolinate from L-aspartate: step 3/4.</text>
</comment>
<comment type="subunit">
    <text evidence="1">Homotetramer; dimer of dimers.</text>
</comment>
<comment type="subcellular location">
    <subcellularLocation>
        <location evidence="1">Cytoplasm</location>
    </subcellularLocation>
</comment>
<comment type="similarity">
    <text evidence="1">Belongs to the DapA family.</text>
</comment>
<comment type="caution">
    <text evidence="2">Was originally thought to be a dihydrodipicolinate synthase (DHDPS), catalyzing the condensation of (S)-aspartate-beta-semialdehyde [(S)-ASA] and pyruvate to dihydrodipicolinate (DHDP). However, it was shown in E.coli that the product of the enzymatic reaction is not dihydrodipicolinate but in fact (4S)-4-hydroxy-2,3,4,5-tetrahydro-(2S)-dipicolinic acid (HTPA), and that the consecutive dehydration reaction leading to DHDP is not spontaneous but catalyzed by DapB.</text>
</comment>
<keyword id="KW-0028">Amino-acid biosynthesis</keyword>
<keyword id="KW-0963">Cytoplasm</keyword>
<keyword id="KW-0220">Diaminopimelate biosynthesis</keyword>
<keyword id="KW-0456">Lyase</keyword>
<keyword id="KW-0457">Lysine biosynthesis</keyword>
<keyword id="KW-1185">Reference proteome</keyword>
<keyword id="KW-0704">Schiff base</keyword>
<proteinExistence type="inferred from homology"/>
<reference key="1">
    <citation type="journal article" date="2008" name="J. Bacteriol.">
        <title>The pangenome structure of Escherichia coli: comparative genomic analysis of E. coli commensal and pathogenic isolates.</title>
        <authorList>
            <person name="Rasko D.A."/>
            <person name="Rosovitz M.J."/>
            <person name="Myers G.S.A."/>
            <person name="Mongodin E.F."/>
            <person name="Fricke W.F."/>
            <person name="Gajer P."/>
            <person name="Crabtree J."/>
            <person name="Sebaihia M."/>
            <person name="Thomson N.R."/>
            <person name="Chaudhuri R."/>
            <person name="Henderson I.R."/>
            <person name="Sperandio V."/>
            <person name="Ravel J."/>
        </authorList>
    </citation>
    <scope>NUCLEOTIDE SEQUENCE [LARGE SCALE GENOMIC DNA]</scope>
    <source>
        <strain>E24377A / ETEC</strain>
    </source>
</reference>
<evidence type="ECO:0000255" key="1">
    <source>
        <dbReference type="HAMAP-Rule" id="MF_00418"/>
    </source>
</evidence>
<evidence type="ECO:0000305" key="2"/>
<name>DAPA_ECO24</name>
<feature type="chain" id="PRO_1000060083" description="4-hydroxy-tetrahydrodipicolinate synthase">
    <location>
        <begin position="1"/>
        <end position="292"/>
    </location>
</feature>
<feature type="active site" description="Proton donor/acceptor" evidence="1">
    <location>
        <position position="133"/>
    </location>
</feature>
<feature type="active site" description="Schiff-base intermediate with substrate" evidence="1">
    <location>
        <position position="161"/>
    </location>
</feature>
<feature type="binding site" evidence="1">
    <location>
        <position position="45"/>
    </location>
    <ligand>
        <name>pyruvate</name>
        <dbReference type="ChEBI" id="CHEBI:15361"/>
    </ligand>
</feature>
<feature type="binding site" evidence="1">
    <location>
        <position position="203"/>
    </location>
    <ligand>
        <name>pyruvate</name>
        <dbReference type="ChEBI" id="CHEBI:15361"/>
    </ligand>
</feature>
<feature type="site" description="Part of a proton relay during catalysis" evidence="1">
    <location>
        <position position="44"/>
    </location>
</feature>
<feature type="site" description="Part of a proton relay during catalysis" evidence="1">
    <location>
        <position position="107"/>
    </location>
</feature>
<sequence>MFTGSIVAIVTPMDEKGNVCRASLKKLIDYHVASGTSAIVSVGTTGESATLNHDEHADVVMMTLELADGRIPVIAGTGANATAEAISLTQRFNDSGIVGCLTVTPYYNRPSQEGLYQHFKAIAEHTDLPQILYNVPSRTGCDLLPETVGRLAKVKNIIGIKEATGNLTRVNQIKELVSDDFVLLSGDDASALDFMQLGGHGVISVTANVAARDMAQMCKLAAEGHFAEARVINQRLMPLHNKLFVEPNPIPVKWACKELGLVATDTLRLPMTPITDSGRETVRAALKHAGLL</sequence>